<feature type="chain" id="PRO_0000280856" description="Enolase 2">
    <location>
        <begin position="1"/>
        <end position="432"/>
    </location>
</feature>
<feature type="active site" description="Proton donor" evidence="1">
    <location>
        <position position="205"/>
    </location>
</feature>
<feature type="active site" description="Proton acceptor" evidence="1">
    <location>
        <position position="339"/>
    </location>
</feature>
<feature type="binding site" evidence="1">
    <location>
        <position position="163"/>
    </location>
    <ligand>
        <name>(2R)-2-phosphoglycerate</name>
        <dbReference type="ChEBI" id="CHEBI:58289"/>
    </ligand>
</feature>
<feature type="binding site" evidence="1 2 4">
    <location>
        <position position="242"/>
    </location>
    <ligand>
        <name>Mg(2+)</name>
        <dbReference type="ChEBI" id="CHEBI:18420"/>
    </ligand>
</feature>
<feature type="binding site" evidence="1 2 4">
    <location>
        <position position="287"/>
    </location>
    <ligand>
        <name>Mg(2+)</name>
        <dbReference type="ChEBI" id="CHEBI:18420"/>
    </ligand>
</feature>
<feature type="binding site" evidence="1 2 4">
    <location>
        <position position="314"/>
    </location>
    <ligand>
        <name>Mg(2+)</name>
        <dbReference type="ChEBI" id="CHEBI:18420"/>
    </ligand>
</feature>
<feature type="binding site" evidence="1">
    <location>
        <position position="339"/>
    </location>
    <ligand>
        <name>(2R)-2-phosphoglycerate</name>
        <dbReference type="ChEBI" id="CHEBI:58289"/>
    </ligand>
</feature>
<feature type="binding site" evidence="1">
    <location>
        <position position="368"/>
    </location>
    <ligand>
        <name>(2R)-2-phosphoglycerate</name>
        <dbReference type="ChEBI" id="CHEBI:58289"/>
    </ligand>
</feature>
<feature type="binding site" evidence="1">
    <location>
        <position position="369"/>
    </location>
    <ligand>
        <name>(2R)-2-phosphoglycerate</name>
        <dbReference type="ChEBI" id="CHEBI:58289"/>
    </ligand>
</feature>
<feature type="binding site" evidence="1">
    <location>
        <position position="390"/>
    </location>
    <ligand>
        <name>(2R)-2-phosphoglycerate</name>
        <dbReference type="ChEBI" id="CHEBI:58289"/>
    </ligand>
</feature>
<feature type="strand" evidence="5">
    <location>
        <begin position="4"/>
        <end position="13"/>
    </location>
</feature>
<feature type="strand" evidence="5">
    <location>
        <begin position="19"/>
        <end position="27"/>
    </location>
</feature>
<feature type="strand" evidence="5">
    <location>
        <begin position="32"/>
        <end position="36"/>
    </location>
</feature>
<feature type="helix" evidence="5">
    <location>
        <begin position="59"/>
        <end position="61"/>
    </location>
</feature>
<feature type="helix" evidence="5">
    <location>
        <begin position="65"/>
        <end position="72"/>
    </location>
</feature>
<feature type="helix" evidence="5">
    <location>
        <begin position="74"/>
        <end position="79"/>
    </location>
</feature>
<feature type="helix" evidence="5">
    <location>
        <begin position="87"/>
        <end position="98"/>
    </location>
</feature>
<feature type="turn" evidence="5">
    <location>
        <begin position="104"/>
        <end position="106"/>
    </location>
</feature>
<feature type="helix" evidence="5">
    <location>
        <begin position="108"/>
        <end position="126"/>
    </location>
</feature>
<feature type="helix" evidence="5">
    <location>
        <begin position="130"/>
        <end position="135"/>
    </location>
</feature>
<feature type="strand" evidence="5">
    <location>
        <begin position="147"/>
        <end position="151"/>
    </location>
</feature>
<feature type="strand" evidence="5">
    <location>
        <begin position="164"/>
        <end position="168"/>
    </location>
</feature>
<feature type="helix" evidence="5">
    <location>
        <begin position="175"/>
        <end position="195"/>
    </location>
</feature>
<feature type="helix" evidence="5">
    <location>
        <begin position="217"/>
        <end position="228"/>
    </location>
</feature>
<feature type="turn" evidence="5">
    <location>
        <begin position="234"/>
        <end position="236"/>
    </location>
</feature>
<feature type="strand" evidence="5">
    <location>
        <begin position="237"/>
        <end position="242"/>
    </location>
</feature>
<feature type="helix" evidence="5">
    <location>
        <begin position="245"/>
        <end position="248"/>
    </location>
</feature>
<feature type="helix" evidence="5">
    <location>
        <begin position="271"/>
        <end position="280"/>
    </location>
</feature>
<feature type="strand" evidence="5">
    <location>
        <begin position="283"/>
        <end position="287"/>
    </location>
</feature>
<feature type="helix" evidence="5">
    <location>
        <begin position="295"/>
        <end position="305"/>
    </location>
</feature>
<feature type="turn" evidence="5">
    <location>
        <begin position="306"/>
        <end position="308"/>
    </location>
</feature>
<feature type="strand" evidence="5">
    <location>
        <begin position="309"/>
        <end position="314"/>
    </location>
</feature>
<feature type="turn" evidence="5">
    <location>
        <begin position="315"/>
        <end position="319"/>
    </location>
</feature>
<feature type="helix" evidence="5">
    <location>
        <begin position="321"/>
        <end position="330"/>
    </location>
</feature>
<feature type="strand" evidence="5">
    <location>
        <begin position="334"/>
        <end position="338"/>
    </location>
</feature>
<feature type="helix" evidence="5">
    <location>
        <begin position="340"/>
        <end position="343"/>
    </location>
</feature>
<feature type="helix" evidence="5">
    <location>
        <begin position="346"/>
        <end position="358"/>
    </location>
</feature>
<feature type="strand" evidence="5">
    <location>
        <begin position="362"/>
        <end position="366"/>
    </location>
</feature>
<feature type="helix" evidence="5">
    <location>
        <begin position="376"/>
        <end position="383"/>
    </location>
</feature>
<feature type="strand" evidence="5">
    <location>
        <begin position="388"/>
        <end position="390"/>
    </location>
</feature>
<feature type="strand" evidence="5">
    <location>
        <begin position="394"/>
        <end position="396"/>
    </location>
</feature>
<feature type="helix" evidence="5">
    <location>
        <begin position="397"/>
        <end position="413"/>
    </location>
</feature>
<feature type="helix" evidence="5">
    <location>
        <begin position="414"/>
        <end position="416"/>
    </location>
</feature>
<feature type="helix" evidence="5">
    <location>
        <begin position="421"/>
        <end position="424"/>
    </location>
</feature>
<accession>Q042F4</accession>
<protein>
    <recommendedName>
        <fullName evidence="1">Enolase 2</fullName>
        <ecNumber evidence="1">4.2.1.11</ecNumber>
    </recommendedName>
    <alternativeName>
        <fullName evidence="1">2-phospho-D-glycerate hydro-lyase 2</fullName>
    </alternativeName>
    <alternativeName>
        <fullName evidence="1">2-phosphoglycerate dehydratase 2</fullName>
    </alternativeName>
</protein>
<comment type="function">
    <text evidence="1">Catalyzes the reversible conversion of 2-phosphoglycerate (2-PG) into phosphoenolpyruvate (PEP). It is essential for the degradation of carbohydrates via glycolysis.</text>
</comment>
<comment type="catalytic activity">
    <reaction evidence="1">
        <text>(2R)-2-phosphoglycerate = phosphoenolpyruvate + H2O</text>
        <dbReference type="Rhea" id="RHEA:10164"/>
        <dbReference type="ChEBI" id="CHEBI:15377"/>
        <dbReference type="ChEBI" id="CHEBI:58289"/>
        <dbReference type="ChEBI" id="CHEBI:58702"/>
        <dbReference type="EC" id="4.2.1.11"/>
    </reaction>
</comment>
<comment type="cofactor">
    <cofactor evidence="1 2">
        <name>Mg(2+)</name>
        <dbReference type="ChEBI" id="CHEBI:18420"/>
    </cofactor>
    <text evidence="1">Binds a second Mg(2+) ion via substrate during catalysis.</text>
</comment>
<comment type="pathway">
    <text evidence="1">Carbohydrate degradation; glycolysis; pyruvate from D-glyceraldehyde 3-phosphate: step 4/5.</text>
</comment>
<comment type="subunit">
    <text evidence="2 3">Homodimer (PubMed:24859038). Probably forms octamers (PubMed:24859038).</text>
</comment>
<comment type="subcellular location">
    <subcellularLocation>
        <location evidence="1">Cytoplasm</location>
    </subcellularLocation>
    <subcellularLocation>
        <location evidence="1">Secreted</location>
    </subcellularLocation>
    <subcellularLocation>
        <location evidence="1">Cell surface</location>
    </subcellularLocation>
    <text evidence="1">Fractions of enolase are present in both the cytoplasm and on the cell surface.</text>
</comment>
<comment type="similarity">
    <text evidence="1">Belongs to the enolase family.</text>
</comment>
<dbReference type="EC" id="4.2.1.11" evidence="1"/>
<dbReference type="EMBL" id="CP000413">
    <property type="protein sequence ID" value="ABJ60668.1"/>
    <property type="molecule type" value="Genomic_DNA"/>
</dbReference>
<dbReference type="PDB" id="4MKS">
    <property type="method" value="X-ray"/>
    <property type="resolution" value="2.08 A"/>
    <property type="chains" value="A/B=1-432"/>
</dbReference>
<dbReference type="PDBsum" id="4MKS"/>
<dbReference type="SMR" id="Q042F4"/>
<dbReference type="KEGG" id="lga:LGAS_1305"/>
<dbReference type="HOGENOM" id="CLU_031223_2_1_9"/>
<dbReference type="BioCyc" id="LGAS324831:G1G6Y-1300-MONOMER"/>
<dbReference type="BRENDA" id="4.2.1.11">
    <property type="organism ID" value="2868"/>
</dbReference>
<dbReference type="UniPathway" id="UPA00109">
    <property type="reaction ID" value="UER00187"/>
</dbReference>
<dbReference type="EvolutionaryTrace" id="Q042F4"/>
<dbReference type="Proteomes" id="UP000000664">
    <property type="component" value="Chromosome"/>
</dbReference>
<dbReference type="GO" id="GO:0009986">
    <property type="term" value="C:cell surface"/>
    <property type="evidence" value="ECO:0007669"/>
    <property type="project" value="UniProtKB-SubCell"/>
</dbReference>
<dbReference type="GO" id="GO:0005576">
    <property type="term" value="C:extracellular region"/>
    <property type="evidence" value="ECO:0007669"/>
    <property type="project" value="UniProtKB-SubCell"/>
</dbReference>
<dbReference type="GO" id="GO:0000015">
    <property type="term" value="C:phosphopyruvate hydratase complex"/>
    <property type="evidence" value="ECO:0007669"/>
    <property type="project" value="InterPro"/>
</dbReference>
<dbReference type="GO" id="GO:0000287">
    <property type="term" value="F:magnesium ion binding"/>
    <property type="evidence" value="ECO:0007669"/>
    <property type="project" value="UniProtKB-UniRule"/>
</dbReference>
<dbReference type="GO" id="GO:0004634">
    <property type="term" value="F:phosphopyruvate hydratase activity"/>
    <property type="evidence" value="ECO:0007669"/>
    <property type="project" value="UniProtKB-UniRule"/>
</dbReference>
<dbReference type="GO" id="GO:0006096">
    <property type="term" value="P:glycolytic process"/>
    <property type="evidence" value="ECO:0007669"/>
    <property type="project" value="UniProtKB-UniRule"/>
</dbReference>
<dbReference type="CDD" id="cd03313">
    <property type="entry name" value="enolase"/>
    <property type="match status" value="1"/>
</dbReference>
<dbReference type="FunFam" id="3.20.20.120:FF:000001">
    <property type="entry name" value="Enolase"/>
    <property type="match status" value="1"/>
</dbReference>
<dbReference type="FunFam" id="3.30.390.10:FF:000001">
    <property type="entry name" value="Enolase"/>
    <property type="match status" value="1"/>
</dbReference>
<dbReference type="Gene3D" id="3.20.20.120">
    <property type="entry name" value="Enolase-like C-terminal domain"/>
    <property type="match status" value="1"/>
</dbReference>
<dbReference type="Gene3D" id="3.30.390.10">
    <property type="entry name" value="Enolase-like, N-terminal domain"/>
    <property type="match status" value="1"/>
</dbReference>
<dbReference type="HAMAP" id="MF_00318">
    <property type="entry name" value="Enolase"/>
    <property type="match status" value="1"/>
</dbReference>
<dbReference type="InterPro" id="IPR000941">
    <property type="entry name" value="Enolase"/>
</dbReference>
<dbReference type="InterPro" id="IPR036849">
    <property type="entry name" value="Enolase-like_C_sf"/>
</dbReference>
<dbReference type="InterPro" id="IPR029017">
    <property type="entry name" value="Enolase-like_N"/>
</dbReference>
<dbReference type="InterPro" id="IPR020810">
    <property type="entry name" value="Enolase_C"/>
</dbReference>
<dbReference type="InterPro" id="IPR020809">
    <property type="entry name" value="Enolase_CS"/>
</dbReference>
<dbReference type="InterPro" id="IPR020811">
    <property type="entry name" value="Enolase_N"/>
</dbReference>
<dbReference type="NCBIfam" id="TIGR01060">
    <property type="entry name" value="eno"/>
    <property type="match status" value="1"/>
</dbReference>
<dbReference type="PANTHER" id="PTHR11902">
    <property type="entry name" value="ENOLASE"/>
    <property type="match status" value="1"/>
</dbReference>
<dbReference type="PANTHER" id="PTHR11902:SF1">
    <property type="entry name" value="ENOLASE"/>
    <property type="match status" value="1"/>
</dbReference>
<dbReference type="Pfam" id="PF00113">
    <property type="entry name" value="Enolase_C"/>
    <property type="match status" value="1"/>
</dbReference>
<dbReference type="Pfam" id="PF03952">
    <property type="entry name" value="Enolase_N"/>
    <property type="match status" value="1"/>
</dbReference>
<dbReference type="PIRSF" id="PIRSF001400">
    <property type="entry name" value="Enolase"/>
    <property type="match status" value="1"/>
</dbReference>
<dbReference type="PRINTS" id="PR00148">
    <property type="entry name" value="ENOLASE"/>
</dbReference>
<dbReference type="SFLD" id="SFLDS00001">
    <property type="entry name" value="Enolase"/>
    <property type="match status" value="1"/>
</dbReference>
<dbReference type="SFLD" id="SFLDF00002">
    <property type="entry name" value="enolase"/>
    <property type="match status" value="1"/>
</dbReference>
<dbReference type="SMART" id="SM01192">
    <property type="entry name" value="Enolase_C"/>
    <property type="match status" value="1"/>
</dbReference>
<dbReference type="SMART" id="SM01193">
    <property type="entry name" value="Enolase_N"/>
    <property type="match status" value="1"/>
</dbReference>
<dbReference type="SUPFAM" id="SSF51604">
    <property type="entry name" value="Enolase C-terminal domain-like"/>
    <property type="match status" value="1"/>
</dbReference>
<dbReference type="SUPFAM" id="SSF54826">
    <property type="entry name" value="Enolase N-terminal domain-like"/>
    <property type="match status" value="1"/>
</dbReference>
<dbReference type="PROSITE" id="PS00164">
    <property type="entry name" value="ENOLASE"/>
    <property type="match status" value="1"/>
</dbReference>
<evidence type="ECO:0000255" key="1">
    <source>
        <dbReference type="HAMAP-Rule" id="MF_00318"/>
    </source>
</evidence>
<evidence type="ECO:0000269" key="2">
    <source>
    </source>
</evidence>
<evidence type="ECO:0000305" key="3">
    <source>
    </source>
</evidence>
<evidence type="ECO:0007744" key="4">
    <source>
        <dbReference type="PDB" id="4MKS"/>
    </source>
</evidence>
<evidence type="ECO:0007829" key="5">
    <source>
        <dbReference type="PDB" id="4MKS"/>
    </source>
</evidence>
<gene>
    <name evidence="1" type="primary">eno2</name>
    <name type="ordered locus">LGAS_1305</name>
</gene>
<organism>
    <name type="scientific">Lactobacillus gasseri (strain ATCC 33323 / DSM 20243 / BCRC 14619 / CIP 102991 / JCM 1131 / KCTC 3163 / NCIMB 11718 / NCTC 13722 / AM63)</name>
    <dbReference type="NCBI Taxonomy" id="324831"/>
    <lineage>
        <taxon>Bacteria</taxon>
        <taxon>Bacillati</taxon>
        <taxon>Bacillota</taxon>
        <taxon>Bacilli</taxon>
        <taxon>Lactobacillales</taxon>
        <taxon>Lactobacillaceae</taxon>
        <taxon>Lactobacillus</taxon>
    </lineage>
</organism>
<reference key="1">
    <citation type="journal article" date="2006" name="Proc. Natl. Acad. Sci. U.S.A.">
        <title>Comparative genomics of the lactic acid bacteria.</title>
        <authorList>
            <person name="Makarova K.S."/>
            <person name="Slesarev A."/>
            <person name="Wolf Y.I."/>
            <person name="Sorokin A."/>
            <person name="Mirkin B."/>
            <person name="Koonin E.V."/>
            <person name="Pavlov A."/>
            <person name="Pavlova N."/>
            <person name="Karamychev V."/>
            <person name="Polouchine N."/>
            <person name="Shakhova V."/>
            <person name="Grigoriev I."/>
            <person name="Lou Y."/>
            <person name="Rohksar D."/>
            <person name="Lucas S."/>
            <person name="Huang K."/>
            <person name="Goodstein D.M."/>
            <person name="Hawkins T."/>
            <person name="Plengvidhya V."/>
            <person name="Welker D."/>
            <person name="Hughes J."/>
            <person name="Goh Y."/>
            <person name="Benson A."/>
            <person name="Baldwin K."/>
            <person name="Lee J.-H."/>
            <person name="Diaz-Muniz I."/>
            <person name="Dosti B."/>
            <person name="Smeianov V."/>
            <person name="Wechter W."/>
            <person name="Barabote R."/>
            <person name="Lorca G."/>
            <person name="Altermann E."/>
            <person name="Barrangou R."/>
            <person name="Ganesan B."/>
            <person name="Xie Y."/>
            <person name="Rawsthorne H."/>
            <person name="Tamir D."/>
            <person name="Parker C."/>
            <person name="Breidt F."/>
            <person name="Broadbent J.R."/>
            <person name="Hutkins R."/>
            <person name="O'Sullivan D."/>
            <person name="Steele J."/>
            <person name="Unlu G."/>
            <person name="Saier M.H. Jr."/>
            <person name="Klaenhammer T."/>
            <person name="Richardson P."/>
            <person name="Kozyavkin S."/>
            <person name="Weimer B.C."/>
            <person name="Mills D.A."/>
        </authorList>
    </citation>
    <scope>NUCLEOTIDE SEQUENCE [LARGE SCALE GENOMIC DNA]</scope>
    <source>
        <strain>ATCC 33323 / DSM 20243 / BCRC 14619 / CIP 102991 / JCM 1131 / KCTC 3163 / NCIMB 11718 / NCTC 13722 / AM63</strain>
    </source>
</reference>
<reference evidence="4" key="2">
    <citation type="journal article" date="2014" name="FEBS Lett.">
        <title>Crystal structure of an efficacious gonococcal adherence inhibitor: an enolase from Lactobacillus gasseri.</title>
        <authorList>
            <person name="Raghunathan K."/>
            <person name="Harris P.T."/>
            <person name="Spurbeck R.R."/>
            <person name="Arvidson C.G."/>
            <person name="Arvidson D.N."/>
        </authorList>
    </citation>
    <scope>X-RAY CRYSTALLOGRAPHY (2.08 ANGSTROMS) IN COMPLEX WITH MG(2+)</scope>
    <scope>COFACTOR</scope>
    <scope>SUBUNIT</scope>
    <source>
        <strain>ATCC 33323 / DSM 20243 / BCRC 14619 / CIP 102991 / JCM 1131 / KCTC 3163 / NCIMB 11718 / NCTC 13722 / AM63</strain>
    </source>
</reference>
<sequence length="432" mass="46911">MSVITDIHAREVLDSRGNPTVEAEVYTELGGFGRAIVPSGASTGEHEAVELRDGDKSRFGGQGVLTAVENVNGEIAKAVIGLDVTDQRLIDQTMIDLDGTPNKGRLGANAILSVSLASARAAADELGLPLYEYLGGPNAHVLPTPMMNVINGGKHADNNVDIQEFMIMPVGAKSLHEAVRMGAETFHTLKGLLQERGESTAVGDEGGFAPNLKNNEEPFEILVEAIQRAGYKPGQDIAIAFDCAASEFYNKDTKKYVTVADGREYTAEEWTSLIEDLVDKYPVISVEDPLDENDWEGWKTFTERLGDKVQIVGDDLFVTNTSYLEKGIKMGVANSILIKLNQIGTLTETFEAIEMAKEAGYTAVVSHRSGETEDTTIADLVVATNAGQIKTGSMSRTDRIAKYNQLMRIEEALGSTAQYKGIHSFYNLHKQF</sequence>
<proteinExistence type="evidence at protein level"/>
<keyword id="KW-0002">3D-structure</keyword>
<keyword id="KW-0963">Cytoplasm</keyword>
<keyword id="KW-0324">Glycolysis</keyword>
<keyword id="KW-0456">Lyase</keyword>
<keyword id="KW-0460">Magnesium</keyword>
<keyword id="KW-0479">Metal-binding</keyword>
<keyword id="KW-0964">Secreted</keyword>
<name>ENO2_LACGA</name>